<reference key="1">
    <citation type="submission" date="2007-09" db="EMBL/GenBank/DDBJ databases">
        <title>Complete genome sequence of Rickettsia canadensis.</title>
        <authorList>
            <person name="Madan A."/>
            <person name="Fahey J."/>
            <person name="Helton E."/>
            <person name="Ketteman M."/>
            <person name="Madan A."/>
            <person name="Rodrigues S."/>
            <person name="Sanchez A."/>
            <person name="Whiting M."/>
            <person name="Dasch G."/>
            <person name="Eremeeva M."/>
        </authorList>
    </citation>
    <scope>NUCLEOTIDE SEQUENCE [LARGE SCALE GENOMIC DNA]</scope>
    <source>
        <strain>McKiel</strain>
    </source>
</reference>
<dbReference type="EC" id="2.4.2.29" evidence="1"/>
<dbReference type="EMBL" id="CP000409">
    <property type="protein sequence ID" value="ABV73870.1"/>
    <property type="molecule type" value="Genomic_DNA"/>
</dbReference>
<dbReference type="RefSeq" id="WP_012149065.1">
    <property type="nucleotide sequence ID" value="NC_009879.1"/>
</dbReference>
<dbReference type="SMR" id="A8EZT7"/>
<dbReference type="STRING" id="293613.A1E_04725"/>
<dbReference type="KEGG" id="rcm:A1E_04725"/>
<dbReference type="eggNOG" id="COG0343">
    <property type="taxonomic scope" value="Bacteria"/>
</dbReference>
<dbReference type="HOGENOM" id="CLU_022060_0_1_5"/>
<dbReference type="UniPathway" id="UPA00392"/>
<dbReference type="Proteomes" id="UP000007056">
    <property type="component" value="Chromosome"/>
</dbReference>
<dbReference type="GO" id="GO:0005737">
    <property type="term" value="C:cytoplasm"/>
    <property type="evidence" value="ECO:0007669"/>
    <property type="project" value="TreeGrafter"/>
</dbReference>
<dbReference type="GO" id="GO:0046872">
    <property type="term" value="F:metal ion binding"/>
    <property type="evidence" value="ECO:0007669"/>
    <property type="project" value="UniProtKB-KW"/>
</dbReference>
<dbReference type="GO" id="GO:0008479">
    <property type="term" value="F:tRNA-guanosine(34) queuine transglycosylase activity"/>
    <property type="evidence" value="ECO:0007669"/>
    <property type="project" value="UniProtKB-UniRule"/>
</dbReference>
<dbReference type="GO" id="GO:0008616">
    <property type="term" value="P:queuosine biosynthetic process"/>
    <property type="evidence" value="ECO:0007669"/>
    <property type="project" value="UniProtKB-UniRule"/>
</dbReference>
<dbReference type="GO" id="GO:0002099">
    <property type="term" value="P:tRNA wobble guanine modification"/>
    <property type="evidence" value="ECO:0007669"/>
    <property type="project" value="TreeGrafter"/>
</dbReference>
<dbReference type="GO" id="GO:0101030">
    <property type="term" value="P:tRNA-guanine transglycosylation"/>
    <property type="evidence" value="ECO:0007669"/>
    <property type="project" value="InterPro"/>
</dbReference>
<dbReference type="FunFam" id="3.20.20.105:FF:000001">
    <property type="entry name" value="Queuine tRNA-ribosyltransferase"/>
    <property type="match status" value="1"/>
</dbReference>
<dbReference type="Gene3D" id="3.20.20.105">
    <property type="entry name" value="Queuine tRNA-ribosyltransferase-like"/>
    <property type="match status" value="1"/>
</dbReference>
<dbReference type="HAMAP" id="MF_00168">
    <property type="entry name" value="Q_tRNA_Tgt"/>
    <property type="match status" value="1"/>
</dbReference>
<dbReference type="InterPro" id="IPR050076">
    <property type="entry name" value="ArchSynthase1/Queuine_TRR"/>
</dbReference>
<dbReference type="InterPro" id="IPR004803">
    <property type="entry name" value="TGT"/>
</dbReference>
<dbReference type="InterPro" id="IPR036511">
    <property type="entry name" value="TGT-like_sf"/>
</dbReference>
<dbReference type="InterPro" id="IPR002616">
    <property type="entry name" value="tRNA_ribo_trans-like"/>
</dbReference>
<dbReference type="NCBIfam" id="TIGR00430">
    <property type="entry name" value="Q_tRNA_tgt"/>
    <property type="match status" value="1"/>
</dbReference>
<dbReference type="NCBIfam" id="TIGR00449">
    <property type="entry name" value="tgt_general"/>
    <property type="match status" value="1"/>
</dbReference>
<dbReference type="PANTHER" id="PTHR46499">
    <property type="entry name" value="QUEUINE TRNA-RIBOSYLTRANSFERASE"/>
    <property type="match status" value="1"/>
</dbReference>
<dbReference type="PANTHER" id="PTHR46499:SF1">
    <property type="entry name" value="QUEUINE TRNA-RIBOSYLTRANSFERASE"/>
    <property type="match status" value="1"/>
</dbReference>
<dbReference type="Pfam" id="PF01702">
    <property type="entry name" value="TGT"/>
    <property type="match status" value="1"/>
</dbReference>
<dbReference type="SUPFAM" id="SSF51713">
    <property type="entry name" value="tRNA-guanine transglycosylase"/>
    <property type="match status" value="1"/>
</dbReference>
<keyword id="KW-0328">Glycosyltransferase</keyword>
<keyword id="KW-0479">Metal-binding</keyword>
<keyword id="KW-0671">Queuosine biosynthesis</keyword>
<keyword id="KW-0808">Transferase</keyword>
<keyword id="KW-0819">tRNA processing</keyword>
<keyword id="KW-0862">Zinc</keyword>
<accession>A8EZT7</accession>
<organism>
    <name type="scientific">Rickettsia canadensis (strain McKiel)</name>
    <dbReference type="NCBI Taxonomy" id="293613"/>
    <lineage>
        <taxon>Bacteria</taxon>
        <taxon>Pseudomonadati</taxon>
        <taxon>Pseudomonadota</taxon>
        <taxon>Alphaproteobacteria</taxon>
        <taxon>Rickettsiales</taxon>
        <taxon>Rickettsiaceae</taxon>
        <taxon>Rickettsieae</taxon>
        <taxon>Rickettsia</taxon>
        <taxon>belli group</taxon>
    </lineage>
</organism>
<proteinExistence type="inferred from homology"/>
<feature type="chain" id="PRO_1000016838" description="Queuine tRNA-ribosyltransferase">
    <location>
        <begin position="1"/>
        <end position="361"/>
    </location>
</feature>
<feature type="region of interest" description="RNA binding" evidence="1">
    <location>
        <begin position="247"/>
        <end position="253"/>
    </location>
</feature>
<feature type="region of interest" description="RNA binding; important for wobble base 34 recognition" evidence="1">
    <location>
        <begin position="271"/>
        <end position="275"/>
    </location>
</feature>
<feature type="active site" description="Proton acceptor" evidence="1">
    <location>
        <position position="92"/>
    </location>
</feature>
<feature type="active site" description="Nucleophile" evidence="1">
    <location>
        <position position="266"/>
    </location>
</feature>
<feature type="binding site" evidence="1">
    <location>
        <begin position="92"/>
        <end position="96"/>
    </location>
    <ligand>
        <name>substrate</name>
    </ligand>
</feature>
<feature type="binding site" evidence="1">
    <location>
        <position position="146"/>
    </location>
    <ligand>
        <name>substrate</name>
    </ligand>
</feature>
<feature type="binding site" evidence="1">
    <location>
        <position position="189"/>
    </location>
    <ligand>
        <name>substrate</name>
    </ligand>
</feature>
<feature type="binding site" evidence="1">
    <location>
        <position position="216"/>
    </location>
    <ligand>
        <name>substrate</name>
    </ligand>
</feature>
<feature type="binding site" evidence="1">
    <location>
        <position position="304"/>
    </location>
    <ligand>
        <name>Zn(2+)</name>
        <dbReference type="ChEBI" id="CHEBI:29105"/>
    </ligand>
</feature>
<feature type="binding site" evidence="1">
    <location>
        <position position="306"/>
    </location>
    <ligand>
        <name>Zn(2+)</name>
        <dbReference type="ChEBI" id="CHEBI:29105"/>
    </ligand>
</feature>
<feature type="binding site" evidence="1">
    <location>
        <position position="309"/>
    </location>
    <ligand>
        <name>Zn(2+)</name>
        <dbReference type="ChEBI" id="CHEBI:29105"/>
    </ligand>
</feature>
<feature type="binding site" evidence="1">
    <location>
        <position position="335"/>
    </location>
    <ligand>
        <name>Zn(2+)</name>
        <dbReference type="ChEBI" id="CHEBI:29105"/>
    </ligand>
</feature>
<evidence type="ECO:0000255" key="1">
    <source>
        <dbReference type="HAMAP-Rule" id="MF_00168"/>
    </source>
</evidence>
<sequence length="361" mass="40468">MSKFSFNIHQMHKKARSGVITTAHGEIRTPAFMPVGTRGTIKAMLSESVAETGADILLGNTYHLMLQPSSERIARLGGLHKFMNWHKPILTDSGGFQVMSLSKLCKITEEGVSFSSHINGDKYMLTPERSTEIQYLLGSTITMAFDECTAYPATFEEAKTSVQLTTRWADRSRKAFVKREGYAQFGIIQGSVYQELREQSAKDLVKLDFEGYAIGGLAVGEGQELMFKVLDYTPNFLPQNKPCYLMGVGKPADIIGAVSRGIDMFDCVIPTRSGRNGQAFTKYGTVNIRNSKYADDDEPLEYDCLCPACKNYSKAYLHYLVKIGEILGSMLMTWHNLTYFQNLMSRIRTYIKAGQDFDFIT</sequence>
<gene>
    <name evidence="1" type="primary">tgt</name>
    <name type="ordered locus">A1E_04725</name>
</gene>
<comment type="function">
    <text evidence="1">Catalyzes the base-exchange of a guanine (G) residue with the queuine precursor 7-aminomethyl-7-deazaguanine (PreQ1) at position 34 (anticodon wobble position) in tRNAs with GU(N) anticodons (tRNA-Asp, -Asn, -His and -Tyr). Catalysis occurs through a double-displacement mechanism. The nucleophile active site attacks the C1' of nucleotide 34 to detach the guanine base from the RNA, forming a covalent enzyme-RNA intermediate. The proton acceptor active site deprotonates the incoming PreQ1, allowing a nucleophilic attack on the C1' of the ribose to form the product. After dissociation, two additional enzymatic reactions on the tRNA convert PreQ1 to queuine (Q), resulting in the hypermodified nucleoside queuosine (7-(((4,5-cis-dihydroxy-2-cyclopenten-1-yl)amino)methyl)-7-deazaguanosine).</text>
</comment>
<comment type="catalytic activity">
    <reaction evidence="1">
        <text>7-aminomethyl-7-carbaguanine + guanosine(34) in tRNA = 7-aminomethyl-7-carbaguanosine(34) in tRNA + guanine</text>
        <dbReference type="Rhea" id="RHEA:24104"/>
        <dbReference type="Rhea" id="RHEA-COMP:10341"/>
        <dbReference type="Rhea" id="RHEA-COMP:10342"/>
        <dbReference type="ChEBI" id="CHEBI:16235"/>
        <dbReference type="ChEBI" id="CHEBI:58703"/>
        <dbReference type="ChEBI" id="CHEBI:74269"/>
        <dbReference type="ChEBI" id="CHEBI:82833"/>
        <dbReference type="EC" id="2.4.2.29"/>
    </reaction>
</comment>
<comment type="cofactor">
    <cofactor evidence="1">
        <name>Zn(2+)</name>
        <dbReference type="ChEBI" id="CHEBI:29105"/>
    </cofactor>
    <text evidence="1">Binds 1 zinc ion per subunit.</text>
</comment>
<comment type="pathway">
    <text evidence="1">tRNA modification; tRNA-queuosine biosynthesis.</text>
</comment>
<comment type="subunit">
    <text evidence="1">Homodimer. Within each dimer, one monomer is responsible for RNA recognition and catalysis, while the other monomer binds to the replacement base PreQ1.</text>
</comment>
<comment type="similarity">
    <text evidence="1">Belongs to the queuine tRNA-ribosyltransferase family.</text>
</comment>
<name>TGT_RICCK</name>
<protein>
    <recommendedName>
        <fullName evidence="1">Queuine tRNA-ribosyltransferase</fullName>
        <ecNumber evidence="1">2.4.2.29</ecNumber>
    </recommendedName>
    <alternativeName>
        <fullName evidence="1">Guanine insertion enzyme</fullName>
    </alternativeName>
    <alternativeName>
        <fullName evidence="1">tRNA-guanine transglycosylase</fullName>
    </alternativeName>
</protein>